<keyword id="KW-0002">3D-structure</keyword>
<keyword id="KW-0046">Antibiotic resistance</keyword>
<keyword id="KW-0963">Cytoplasm</keyword>
<keyword id="KW-0903">Direct protein sequencing</keyword>
<keyword id="KW-0238">DNA-binding</keyword>
<keyword id="KW-0678">Repressor</keyword>
<keyword id="KW-0804">Transcription</keyword>
<keyword id="KW-0805">Transcription regulation</keyword>
<comment type="function">
    <text>Transcriptional repressor that constitutively blocks the transcription of the gene for the penicillin-binding protein MecA. Binds palindromic DNA with the sequence 5'-TACA-[AT]-N-TGTA-3'. Regulates genes involved in antibiotic resistance. Binds DNA as a dimer.</text>
</comment>
<comment type="subunit">
    <text evidence="2 3 4">Monomer and homodimer.</text>
</comment>
<comment type="subcellular location">
    <subcellularLocation>
        <location evidence="5">Cytoplasm</location>
    </subcellularLocation>
</comment>
<comment type="PTM">
    <text evidence="1">Upon exposure to beta-lactams, proteolytic cleavage at a single site impairs dimerization and abolishes repressor activity.</text>
</comment>
<comment type="similarity">
    <text evidence="5">Belongs to the BlaI transcriptional regulatory family.</text>
</comment>
<organism>
    <name type="scientific">Staphylococcus aureus (strain N315)</name>
    <dbReference type="NCBI Taxonomy" id="158879"/>
    <lineage>
        <taxon>Bacteria</taxon>
        <taxon>Bacillati</taxon>
        <taxon>Bacillota</taxon>
        <taxon>Bacilli</taxon>
        <taxon>Bacillales</taxon>
        <taxon>Staphylococcaceae</taxon>
        <taxon>Staphylococcus</taxon>
    </lineage>
</organism>
<protein>
    <recommendedName>
        <fullName>Methicillin resistance regulatory protein MecI</fullName>
    </recommendedName>
</protein>
<sequence length="123" mass="14790">MDNKTYEISSAEWEVMNIIWMKKYASANNIIEEIQMQKDWSPKTIRTLITRLYKKGFIDRKKDNKIFQYYSLVEESDIKYKTSKNFINKVYKGGFNSLVLNFVEKEDLSQDEIEELRNILNKK</sequence>
<reference key="1">
    <citation type="journal article" date="1992" name="FEBS Lett.">
        <title>Molecular cloning and nucleotide sequence determination of the regulator region of mecA gene in methicillin-resistant Staphylococcus aureus (MRSA).</title>
        <authorList>
            <person name="Hiramatsu K."/>
            <person name="Asada K."/>
            <person name="Suzuki E."/>
            <person name="Okonogi K."/>
            <person name="Yokota T."/>
        </authorList>
    </citation>
    <scope>NUCLEOTIDE SEQUENCE [GENOMIC DNA]</scope>
</reference>
<reference key="2">
    <citation type="journal article" date="1999" name="Antimicrob. Agents Chemother.">
        <title>Cloning and nucleotide sequence determination of the entire mec DNA of pre-methicillin-resistant Staphylococcus aureus N315.</title>
        <authorList>
            <person name="Ito T."/>
            <person name="Katayama Y."/>
            <person name="Hiramatsu K."/>
        </authorList>
    </citation>
    <scope>NUCLEOTIDE SEQUENCE [GENOMIC DNA]</scope>
</reference>
<reference key="3">
    <citation type="journal article" date="2001" name="Lancet">
        <title>Whole genome sequencing of meticillin-resistant Staphylococcus aureus.</title>
        <authorList>
            <person name="Kuroda M."/>
            <person name="Ohta T."/>
            <person name="Uchiyama I."/>
            <person name="Baba T."/>
            <person name="Yuzawa H."/>
            <person name="Kobayashi I."/>
            <person name="Cui L."/>
            <person name="Oguchi A."/>
            <person name="Aoki K."/>
            <person name="Nagai Y."/>
            <person name="Lian J.-Q."/>
            <person name="Ito T."/>
            <person name="Kanamori M."/>
            <person name="Matsumaru H."/>
            <person name="Maruyama A."/>
            <person name="Murakami H."/>
            <person name="Hosoyama A."/>
            <person name="Mizutani-Ui Y."/>
            <person name="Takahashi N.K."/>
            <person name="Sawano T."/>
            <person name="Inoue R."/>
            <person name="Kaito C."/>
            <person name="Sekimizu K."/>
            <person name="Hirakawa H."/>
            <person name="Kuhara S."/>
            <person name="Goto S."/>
            <person name="Yabuzaki J."/>
            <person name="Kanehisa M."/>
            <person name="Yamashita A."/>
            <person name="Oshima K."/>
            <person name="Furuya K."/>
            <person name="Yoshino C."/>
            <person name="Shiba T."/>
            <person name="Hattori M."/>
            <person name="Ogasawara N."/>
            <person name="Hayashi H."/>
            <person name="Hiramatsu K."/>
        </authorList>
    </citation>
    <scope>NUCLEOTIDE SEQUENCE [LARGE SCALE GENOMIC DNA]</scope>
    <source>
        <strain>N315</strain>
    </source>
</reference>
<reference key="4">
    <citation type="journal article" date="2003" name="J. Biol. Chem.">
        <title>Three-dimensional structure of MecI. Molecular basis for transcriptional regulation of staphylococcal methicillin resistance.</title>
        <authorList>
            <person name="Garcia-Castellanos R."/>
            <person name="Marrero A."/>
            <person name="Mallorqui-Fernandez G."/>
            <person name="Potempa J."/>
            <person name="Coll M."/>
            <person name="Gomis-Rueth F.X."/>
        </authorList>
    </citation>
    <scope>X-RAY CRYSTALLOGRAPHY (2.4 ANGSTROMS)</scope>
    <scope>INTERACTION WITH DNA</scope>
    <scope>PROTEIN SEQUENCE OF N-TERMINUS</scope>
    <scope>SUBUNIT</scope>
</reference>
<reference key="5">
    <citation type="journal article" date="2004" name="J. Biol. Chem.">
        <title>On the transcriptional regulation of methicillin resistance: MecI repressor in complex with its operator.</title>
        <authorList>
            <person name="Garcia-Castellanos R."/>
            <person name="Mallorqui-Fernandez G."/>
            <person name="Marrero A."/>
            <person name="Potempa J."/>
            <person name="Coll M."/>
            <person name="Gomis-Rueth F.X."/>
        </authorList>
    </citation>
    <scope>X-RAY CRYSTALLOGRAPHY (2.8 ANGSTROMS) IN COMPLEX WITH DNA</scope>
    <scope>SUBUNIT</scope>
</reference>
<reference key="6">
    <citation type="journal article" date="2006" name="Acta Crystallogr. F">
        <title>Structure of the MecI repressor from Staphylococcus aureus in complex with the cognate DNA operator of mec.</title>
        <authorList>
            <person name="Safo M.K."/>
            <person name="Ko T.-P."/>
            <person name="Musayev F.N."/>
            <person name="Zhao Q."/>
            <person name="Wang A.H.-J."/>
            <person name="Archer G.L."/>
        </authorList>
    </citation>
    <scope>X-RAY CRYSTALLOGRAPHY (3.8 ANGSTROMS) IN COMPLEX WITH DNA</scope>
</reference>
<name>MECI_STAAN</name>
<accession>P68261</accession>
<accession>P26598</accession>
<evidence type="ECO:0000250" key="1"/>
<evidence type="ECO:0000269" key="2">
    <source>
    </source>
</evidence>
<evidence type="ECO:0000269" key="3">
    <source>
    </source>
</evidence>
<evidence type="ECO:0000269" key="4">
    <source>
    </source>
</evidence>
<evidence type="ECO:0000305" key="5"/>
<evidence type="ECO:0007829" key="6">
    <source>
        <dbReference type="PDB" id="1OKR"/>
    </source>
</evidence>
<gene>
    <name type="primary">mecI</name>
    <name type="ordered locus">SA0040</name>
</gene>
<dbReference type="EMBL" id="X63598">
    <property type="protein sequence ID" value="CAA45143.1"/>
    <property type="molecule type" value="Genomic_DNA"/>
</dbReference>
<dbReference type="EMBL" id="D86934">
    <property type="protein sequence ID" value="BAA82218.1"/>
    <property type="molecule type" value="Genomic_DNA"/>
</dbReference>
<dbReference type="EMBL" id="BA000018">
    <property type="protein sequence ID" value="BAB41258.1"/>
    <property type="molecule type" value="Genomic_DNA"/>
</dbReference>
<dbReference type="PIR" id="S20576">
    <property type="entry name" value="S20576"/>
</dbReference>
<dbReference type="RefSeq" id="WP_000369214.1">
    <property type="nucleotide sequence ID" value="NC_002745.2"/>
</dbReference>
<dbReference type="PDB" id="1OKR">
    <property type="method" value="X-ray"/>
    <property type="resolution" value="2.40 A"/>
    <property type="chains" value="A/B=1-123"/>
</dbReference>
<dbReference type="PDB" id="1SAX">
    <property type="method" value="X-ray"/>
    <property type="resolution" value="2.80 A"/>
    <property type="chains" value="A/B=1-123"/>
</dbReference>
<dbReference type="PDB" id="1SD6">
    <property type="method" value="X-ray"/>
    <property type="resolution" value="2.65 A"/>
    <property type="chains" value="A/B=1-123"/>
</dbReference>
<dbReference type="PDB" id="1SD7">
    <property type="method" value="X-ray"/>
    <property type="resolution" value="2.65 A"/>
    <property type="chains" value="A/B=1-123"/>
</dbReference>
<dbReference type="PDB" id="2D45">
    <property type="method" value="X-ray"/>
    <property type="resolution" value="3.80 A"/>
    <property type="chains" value="A/B/C/D=1-123"/>
</dbReference>
<dbReference type="PDBsum" id="1OKR"/>
<dbReference type="PDBsum" id="1SAX"/>
<dbReference type="PDBsum" id="1SD6"/>
<dbReference type="PDBsum" id="1SD7"/>
<dbReference type="PDBsum" id="2D45"/>
<dbReference type="SMR" id="P68261"/>
<dbReference type="EnsemblBacteria" id="BAB41258">
    <property type="protein sequence ID" value="BAB41258"/>
    <property type="gene ID" value="BAB41258"/>
</dbReference>
<dbReference type="GeneID" id="86196939"/>
<dbReference type="KEGG" id="sau:SA0040"/>
<dbReference type="HOGENOM" id="CLU_119090_2_1_9"/>
<dbReference type="EvolutionaryTrace" id="P68261"/>
<dbReference type="GO" id="GO:0005737">
    <property type="term" value="C:cytoplasm"/>
    <property type="evidence" value="ECO:0007669"/>
    <property type="project" value="UniProtKB-SubCell"/>
</dbReference>
<dbReference type="GO" id="GO:0003677">
    <property type="term" value="F:DNA binding"/>
    <property type="evidence" value="ECO:0007669"/>
    <property type="project" value="UniProtKB-KW"/>
</dbReference>
<dbReference type="GO" id="GO:0045892">
    <property type="term" value="P:negative regulation of DNA-templated transcription"/>
    <property type="evidence" value="ECO:0007669"/>
    <property type="project" value="InterPro"/>
</dbReference>
<dbReference type="GO" id="GO:0046677">
    <property type="term" value="P:response to antibiotic"/>
    <property type="evidence" value="ECO:0007669"/>
    <property type="project" value="UniProtKB-KW"/>
</dbReference>
<dbReference type="Gene3D" id="1.10.4040.10">
    <property type="entry name" value="Penicillinase repressor domain"/>
    <property type="match status" value="1"/>
</dbReference>
<dbReference type="Gene3D" id="1.10.10.10">
    <property type="entry name" value="Winged helix-like DNA-binding domain superfamily/Winged helix DNA-binding domain"/>
    <property type="match status" value="1"/>
</dbReference>
<dbReference type="InterPro" id="IPR005650">
    <property type="entry name" value="BlaI_family"/>
</dbReference>
<dbReference type="InterPro" id="IPR036388">
    <property type="entry name" value="WH-like_DNA-bd_sf"/>
</dbReference>
<dbReference type="InterPro" id="IPR036390">
    <property type="entry name" value="WH_DNA-bd_sf"/>
</dbReference>
<dbReference type="NCBIfam" id="NF000243">
    <property type="entry name" value="MecI_of_mecA"/>
    <property type="match status" value="1"/>
</dbReference>
<dbReference type="Pfam" id="PF03965">
    <property type="entry name" value="Penicillinase_R"/>
    <property type="match status" value="1"/>
</dbReference>
<dbReference type="PIRSF" id="PIRSF019455">
    <property type="entry name" value="CopR_AtkY"/>
    <property type="match status" value="1"/>
</dbReference>
<dbReference type="SUPFAM" id="SSF46785">
    <property type="entry name" value="Winged helix' DNA-binding domain"/>
    <property type="match status" value="1"/>
</dbReference>
<proteinExistence type="evidence at protein level"/>
<feature type="chain" id="PRO_0000062797" description="Methicillin resistance regulatory protein MecI">
    <location>
        <begin position="1"/>
        <end position="123"/>
    </location>
</feature>
<feature type="DNA-binding region" description="H-T-H motif">
    <location>
        <begin position="7"/>
        <end position="71"/>
    </location>
</feature>
<feature type="region of interest" description="Important for dimerization">
    <location>
        <begin position="74"/>
        <end position="123"/>
    </location>
</feature>
<feature type="site" description="Cleavage" evidence="1">
    <location>
        <begin position="101"/>
        <end position="102"/>
    </location>
</feature>
<feature type="helix" evidence="6">
    <location>
        <begin position="10"/>
        <end position="22"/>
    </location>
</feature>
<feature type="strand" evidence="6">
    <location>
        <begin position="23"/>
        <end position="26"/>
    </location>
</feature>
<feature type="helix" evidence="6">
    <location>
        <begin position="27"/>
        <end position="37"/>
    </location>
</feature>
<feature type="helix" evidence="6">
    <location>
        <begin position="42"/>
        <end position="54"/>
    </location>
</feature>
<feature type="strand" evidence="6">
    <location>
        <begin position="57"/>
        <end position="63"/>
    </location>
</feature>
<feature type="strand" evidence="6">
    <location>
        <begin position="66"/>
        <end position="73"/>
    </location>
</feature>
<feature type="helix" evidence="6">
    <location>
        <begin position="75"/>
        <end position="90"/>
    </location>
</feature>
<feature type="helix" evidence="6">
    <location>
        <begin position="95"/>
        <end position="105"/>
    </location>
</feature>
<feature type="helix" evidence="6">
    <location>
        <begin position="110"/>
        <end position="120"/>
    </location>
</feature>